<feature type="chain" id="PRO_1000115593" description="Trigger factor">
    <location>
        <begin position="1"/>
        <end position="432"/>
    </location>
</feature>
<feature type="domain" description="PPIase FKBP-type" evidence="1">
    <location>
        <begin position="163"/>
        <end position="248"/>
    </location>
</feature>
<reference key="1">
    <citation type="submission" date="2008-01" db="EMBL/GenBank/DDBJ databases">
        <title>Complete sequence of Thermoanaerobacter sp. X514.</title>
        <authorList>
            <consortium name="US DOE Joint Genome Institute"/>
            <person name="Copeland A."/>
            <person name="Lucas S."/>
            <person name="Lapidus A."/>
            <person name="Barry K."/>
            <person name="Glavina del Rio T."/>
            <person name="Dalin E."/>
            <person name="Tice H."/>
            <person name="Pitluck S."/>
            <person name="Bruce D."/>
            <person name="Goodwin L."/>
            <person name="Saunders E."/>
            <person name="Brettin T."/>
            <person name="Detter J.C."/>
            <person name="Han C."/>
            <person name="Schmutz J."/>
            <person name="Larimer F."/>
            <person name="Land M."/>
            <person name="Hauser L."/>
            <person name="Kyrpides N."/>
            <person name="Kim E."/>
            <person name="Hemme C."/>
            <person name="Fields M.W."/>
            <person name="He Z."/>
            <person name="Zhou J."/>
            <person name="Richardson P."/>
        </authorList>
    </citation>
    <scope>NUCLEOTIDE SEQUENCE [LARGE SCALE GENOMIC DNA]</scope>
    <source>
        <strain>X514</strain>
    </source>
</reference>
<accession>B0K534</accession>
<gene>
    <name evidence="1" type="primary">tig</name>
    <name type="ordered locus">Teth514_2302</name>
</gene>
<dbReference type="EC" id="5.2.1.8" evidence="1"/>
<dbReference type="EMBL" id="CP000923">
    <property type="protein sequence ID" value="ABY93565.1"/>
    <property type="molecule type" value="Genomic_DNA"/>
</dbReference>
<dbReference type="RefSeq" id="WP_009052705.1">
    <property type="nucleotide sequence ID" value="NC_010320.1"/>
</dbReference>
<dbReference type="SMR" id="B0K534"/>
<dbReference type="KEGG" id="tex:Teth514_2302"/>
<dbReference type="HOGENOM" id="CLU_033058_3_2_9"/>
<dbReference type="Proteomes" id="UP000002155">
    <property type="component" value="Chromosome"/>
</dbReference>
<dbReference type="GO" id="GO:0005737">
    <property type="term" value="C:cytoplasm"/>
    <property type="evidence" value="ECO:0007669"/>
    <property type="project" value="UniProtKB-SubCell"/>
</dbReference>
<dbReference type="GO" id="GO:0003755">
    <property type="term" value="F:peptidyl-prolyl cis-trans isomerase activity"/>
    <property type="evidence" value="ECO:0007669"/>
    <property type="project" value="UniProtKB-UniRule"/>
</dbReference>
<dbReference type="GO" id="GO:0044183">
    <property type="term" value="F:protein folding chaperone"/>
    <property type="evidence" value="ECO:0007669"/>
    <property type="project" value="TreeGrafter"/>
</dbReference>
<dbReference type="GO" id="GO:0043022">
    <property type="term" value="F:ribosome binding"/>
    <property type="evidence" value="ECO:0007669"/>
    <property type="project" value="TreeGrafter"/>
</dbReference>
<dbReference type="GO" id="GO:0051083">
    <property type="term" value="P:'de novo' cotranslational protein folding"/>
    <property type="evidence" value="ECO:0007669"/>
    <property type="project" value="TreeGrafter"/>
</dbReference>
<dbReference type="GO" id="GO:0051301">
    <property type="term" value="P:cell division"/>
    <property type="evidence" value="ECO:0007669"/>
    <property type="project" value="UniProtKB-KW"/>
</dbReference>
<dbReference type="GO" id="GO:0061077">
    <property type="term" value="P:chaperone-mediated protein folding"/>
    <property type="evidence" value="ECO:0007669"/>
    <property type="project" value="TreeGrafter"/>
</dbReference>
<dbReference type="GO" id="GO:0015031">
    <property type="term" value="P:protein transport"/>
    <property type="evidence" value="ECO:0007669"/>
    <property type="project" value="UniProtKB-UniRule"/>
</dbReference>
<dbReference type="GO" id="GO:0043335">
    <property type="term" value="P:protein unfolding"/>
    <property type="evidence" value="ECO:0007669"/>
    <property type="project" value="TreeGrafter"/>
</dbReference>
<dbReference type="FunFam" id="3.10.50.40:FF:000001">
    <property type="entry name" value="Trigger factor"/>
    <property type="match status" value="1"/>
</dbReference>
<dbReference type="Gene3D" id="3.10.50.40">
    <property type="match status" value="1"/>
</dbReference>
<dbReference type="Gene3D" id="3.30.70.1050">
    <property type="entry name" value="Trigger factor ribosome-binding domain"/>
    <property type="match status" value="1"/>
</dbReference>
<dbReference type="Gene3D" id="1.10.3120.10">
    <property type="entry name" value="Trigger factor, C-terminal domain"/>
    <property type="match status" value="1"/>
</dbReference>
<dbReference type="HAMAP" id="MF_00303">
    <property type="entry name" value="Trigger_factor_Tig"/>
    <property type="match status" value="1"/>
</dbReference>
<dbReference type="InterPro" id="IPR046357">
    <property type="entry name" value="PPIase_dom_sf"/>
</dbReference>
<dbReference type="InterPro" id="IPR001179">
    <property type="entry name" value="PPIase_FKBP_dom"/>
</dbReference>
<dbReference type="InterPro" id="IPR005215">
    <property type="entry name" value="Trig_fac"/>
</dbReference>
<dbReference type="InterPro" id="IPR008880">
    <property type="entry name" value="Trigger_fac_C"/>
</dbReference>
<dbReference type="InterPro" id="IPR037041">
    <property type="entry name" value="Trigger_fac_C_sf"/>
</dbReference>
<dbReference type="InterPro" id="IPR008881">
    <property type="entry name" value="Trigger_fac_ribosome-bd_bac"/>
</dbReference>
<dbReference type="InterPro" id="IPR036611">
    <property type="entry name" value="Trigger_fac_ribosome-bd_sf"/>
</dbReference>
<dbReference type="InterPro" id="IPR027304">
    <property type="entry name" value="Trigger_fact/SurA_dom_sf"/>
</dbReference>
<dbReference type="NCBIfam" id="TIGR00115">
    <property type="entry name" value="tig"/>
    <property type="match status" value="1"/>
</dbReference>
<dbReference type="PANTHER" id="PTHR30560">
    <property type="entry name" value="TRIGGER FACTOR CHAPERONE AND PEPTIDYL-PROLYL CIS/TRANS ISOMERASE"/>
    <property type="match status" value="1"/>
</dbReference>
<dbReference type="PANTHER" id="PTHR30560:SF3">
    <property type="entry name" value="TRIGGER FACTOR-LIKE PROTEIN TIG, CHLOROPLASTIC"/>
    <property type="match status" value="1"/>
</dbReference>
<dbReference type="Pfam" id="PF00254">
    <property type="entry name" value="FKBP_C"/>
    <property type="match status" value="1"/>
</dbReference>
<dbReference type="Pfam" id="PF05698">
    <property type="entry name" value="Trigger_C"/>
    <property type="match status" value="1"/>
</dbReference>
<dbReference type="Pfam" id="PF05697">
    <property type="entry name" value="Trigger_N"/>
    <property type="match status" value="1"/>
</dbReference>
<dbReference type="PIRSF" id="PIRSF003095">
    <property type="entry name" value="Trigger_factor"/>
    <property type="match status" value="1"/>
</dbReference>
<dbReference type="SUPFAM" id="SSF54534">
    <property type="entry name" value="FKBP-like"/>
    <property type="match status" value="1"/>
</dbReference>
<dbReference type="SUPFAM" id="SSF109998">
    <property type="entry name" value="Triger factor/SurA peptide-binding domain-like"/>
    <property type="match status" value="1"/>
</dbReference>
<dbReference type="SUPFAM" id="SSF102735">
    <property type="entry name" value="Trigger factor ribosome-binding domain"/>
    <property type="match status" value="1"/>
</dbReference>
<dbReference type="PROSITE" id="PS50059">
    <property type="entry name" value="FKBP_PPIASE"/>
    <property type="match status" value="1"/>
</dbReference>
<proteinExistence type="inferred from homology"/>
<name>TIG_THEPX</name>
<comment type="function">
    <text evidence="1">Involved in protein export. Acts as a chaperone by maintaining the newly synthesized protein in an open conformation. Functions as a peptidyl-prolyl cis-trans isomerase.</text>
</comment>
<comment type="catalytic activity">
    <reaction evidence="1">
        <text>[protein]-peptidylproline (omega=180) = [protein]-peptidylproline (omega=0)</text>
        <dbReference type="Rhea" id="RHEA:16237"/>
        <dbReference type="Rhea" id="RHEA-COMP:10747"/>
        <dbReference type="Rhea" id="RHEA-COMP:10748"/>
        <dbReference type="ChEBI" id="CHEBI:83833"/>
        <dbReference type="ChEBI" id="CHEBI:83834"/>
        <dbReference type="EC" id="5.2.1.8"/>
    </reaction>
</comment>
<comment type="subcellular location">
    <subcellularLocation>
        <location>Cytoplasm</location>
    </subcellularLocation>
    <text evidence="1">About half TF is bound to the ribosome near the polypeptide exit tunnel while the other half is free in the cytoplasm.</text>
</comment>
<comment type="domain">
    <text evidence="1">Consists of 3 domains; the N-terminus binds the ribosome, the middle domain has PPIase activity, while the C-terminus has intrinsic chaperone activity on its own.</text>
</comment>
<comment type="similarity">
    <text evidence="1">Belongs to the FKBP-type PPIase family. Tig subfamily.</text>
</comment>
<protein>
    <recommendedName>
        <fullName evidence="1">Trigger factor</fullName>
        <shortName evidence="1">TF</shortName>
        <ecNumber evidence="1">5.2.1.8</ecNumber>
    </recommendedName>
    <alternativeName>
        <fullName evidence="1">PPIase</fullName>
    </alternativeName>
</protein>
<evidence type="ECO:0000255" key="1">
    <source>
        <dbReference type="HAMAP-Rule" id="MF_00303"/>
    </source>
</evidence>
<sequence length="432" mass="49650">MGVSLKKLEKSVATIELTIPSEKFEEGLNFAFKKNASKFNVPGFRRGKAPRVIVERYYGEGVLYEDAVEYVFDEAYKEALKTFNLEPVDYPDINILQIGKGKDLILEATVPVMPEVELGEYKGIEIEKIEYNVYDGDVEYELEKLRQQNARIVPVEGRPAESGDIAVIDFEGFIDGKPFEGGKAENYELELGSNTFIPGFEDQIIGHNVNETFDVNITFPEDYRVEELRGKSAVFKVTLKALNKKELPELDDEFAKDVSEFETLDELKADIRKKLEEKNRVEAENEMKEKAVMKVVENAKVDIPDVMVERQIDISLRDLDYNLRYQGLDLNSYLSITGKTLENLRKEMWDGALNRVKTQLVIDKIAKVENIEVTEEELENKLKEMAANYRINLEEFKKSLTESQINSIKEDIAYYKTIDFIFSKCKIISKEE</sequence>
<keyword id="KW-0131">Cell cycle</keyword>
<keyword id="KW-0132">Cell division</keyword>
<keyword id="KW-0143">Chaperone</keyword>
<keyword id="KW-0963">Cytoplasm</keyword>
<keyword id="KW-0413">Isomerase</keyword>
<keyword id="KW-0697">Rotamase</keyword>
<organism>
    <name type="scientific">Thermoanaerobacter sp. (strain X514)</name>
    <dbReference type="NCBI Taxonomy" id="399726"/>
    <lineage>
        <taxon>Bacteria</taxon>
        <taxon>Bacillati</taxon>
        <taxon>Bacillota</taxon>
        <taxon>Clostridia</taxon>
        <taxon>Thermoanaerobacterales</taxon>
        <taxon>Thermoanaerobacteraceae</taxon>
        <taxon>Thermoanaerobacter</taxon>
    </lineage>
</organism>